<proteinExistence type="inferred from homology"/>
<dbReference type="EC" id="7.2.2.7" evidence="1"/>
<dbReference type="EMBL" id="CP000431">
    <property type="protein sequence ID" value="ABG98793.1"/>
    <property type="molecule type" value="Genomic_DNA"/>
</dbReference>
<dbReference type="RefSeq" id="WP_011598761.1">
    <property type="nucleotide sequence ID" value="NC_008268.1"/>
</dbReference>
<dbReference type="SMR" id="Q0S0Z3"/>
<dbReference type="KEGG" id="rha:RHA1_ro07027"/>
<dbReference type="PATRIC" id="fig|101510.16.peg.7087"/>
<dbReference type="eggNOG" id="COG3842">
    <property type="taxonomic scope" value="Bacteria"/>
</dbReference>
<dbReference type="HOGENOM" id="CLU_000604_1_1_11"/>
<dbReference type="OrthoDB" id="9802264at2"/>
<dbReference type="Proteomes" id="UP000008710">
    <property type="component" value="Chromosome"/>
</dbReference>
<dbReference type="GO" id="GO:0043190">
    <property type="term" value="C:ATP-binding cassette (ABC) transporter complex"/>
    <property type="evidence" value="ECO:0007669"/>
    <property type="project" value="InterPro"/>
</dbReference>
<dbReference type="GO" id="GO:0015408">
    <property type="term" value="F:ABC-type ferric iron transporter activity"/>
    <property type="evidence" value="ECO:0007669"/>
    <property type="project" value="UniProtKB-EC"/>
</dbReference>
<dbReference type="GO" id="GO:0005524">
    <property type="term" value="F:ATP binding"/>
    <property type="evidence" value="ECO:0007669"/>
    <property type="project" value="UniProtKB-KW"/>
</dbReference>
<dbReference type="GO" id="GO:0016887">
    <property type="term" value="F:ATP hydrolysis activity"/>
    <property type="evidence" value="ECO:0007669"/>
    <property type="project" value="InterPro"/>
</dbReference>
<dbReference type="CDD" id="cd03259">
    <property type="entry name" value="ABC_Carb_Solutes_like"/>
    <property type="match status" value="1"/>
</dbReference>
<dbReference type="FunFam" id="3.40.50.300:FF:000425">
    <property type="entry name" value="Probable ABC transporter, ATP-binding subunit"/>
    <property type="match status" value="1"/>
</dbReference>
<dbReference type="Gene3D" id="3.40.50.300">
    <property type="entry name" value="P-loop containing nucleotide triphosphate hydrolases"/>
    <property type="match status" value="1"/>
</dbReference>
<dbReference type="InterPro" id="IPR003593">
    <property type="entry name" value="AAA+_ATPase"/>
</dbReference>
<dbReference type="InterPro" id="IPR050093">
    <property type="entry name" value="ABC_SmlMolc_Importer"/>
</dbReference>
<dbReference type="InterPro" id="IPR003439">
    <property type="entry name" value="ABC_transporter-like_ATP-bd"/>
</dbReference>
<dbReference type="InterPro" id="IPR017871">
    <property type="entry name" value="ABC_transporter-like_CS"/>
</dbReference>
<dbReference type="InterPro" id="IPR015853">
    <property type="entry name" value="ABC_transpr_FbpC"/>
</dbReference>
<dbReference type="InterPro" id="IPR008995">
    <property type="entry name" value="Mo/tungstate-bd_C_term_dom"/>
</dbReference>
<dbReference type="InterPro" id="IPR027417">
    <property type="entry name" value="P-loop_NTPase"/>
</dbReference>
<dbReference type="InterPro" id="IPR013611">
    <property type="entry name" value="Transp-assoc_OB_typ2"/>
</dbReference>
<dbReference type="PANTHER" id="PTHR42781">
    <property type="entry name" value="SPERMIDINE/PUTRESCINE IMPORT ATP-BINDING PROTEIN POTA"/>
    <property type="match status" value="1"/>
</dbReference>
<dbReference type="PANTHER" id="PTHR42781:SF4">
    <property type="entry name" value="SPERMIDINE_PUTRESCINE IMPORT ATP-BINDING PROTEIN POTA"/>
    <property type="match status" value="1"/>
</dbReference>
<dbReference type="Pfam" id="PF00005">
    <property type="entry name" value="ABC_tran"/>
    <property type="match status" value="1"/>
</dbReference>
<dbReference type="Pfam" id="PF08402">
    <property type="entry name" value="TOBE_2"/>
    <property type="match status" value="1"/>
</dbReference>
<dbReference type="SMART" id="SM00382">
    <property type="entry name" value="AAA"/>
    <property type="match status" value="1"/>
</dbReference>
<dbReference type="SUPFAM" id="SSF50331">
    <property type="entry name" value="MOP-like"/>
    <property type="match status" value="1"/>
</dbReference>
<dbReference type="SUPFAM" id="SSF52540">
    <property type="entry name" value="P-loop containing nucleoside triphosphate hydrolases"/>
    <property type="match status" value="1"/>
</dbReference>
<dbReference type="PROSITE" id="PS00211">
    <property type="entry name" value="ABC_TRANSPORTER_1"/>
    <property type="match status" value="1"/>
</dbReference>
<dbReference type="PROSITE" id="PS50893">
    <property type="entry name" value="ABC_TRANSPORTER_2"/>
    <property type="match status" value="1"/>
</dbReference>
<dbReference type="PROSITE" id="PS51242">
    <property type="entry name" value="FBPC"/>
    <property type="match status" value="1"/>
</dbReference>
<reference key="1">
    <citation type="journal article" date="2006" name="Proc. Natl. Acad. Sci. U.S.A.">
        <title>The complete genome of Rhodococcus sp. RHA1 provides insights into a catabolic powerhouse.</title>
        <authorList>
            <person name="McLeod M.P."/>
            <person name="Warren R.L."/>
            <person name="Hsiao W.W.L."/>
            <person name="Araki N."/>
            <person name="Myhre M."/>
            <person name="Fernandes C."/>
            <person name="Miyazawa D."/>
            <person name="Wong W."/>
            <person name="Lillquist A.L."/>
            <person name="Wang D."/>
            <person name="Dosanjh M."/>
            <person name="Hara H."/>
            <person name="Petrescu A."/>
            <person name="Morin R.D."/>
            <person name="Yang G."/>
            <person name="Stott J.M."/>
            <person name="Schein J.E."/>
            <person name="Shin H."/>
            <person name="Smailus D."/>
            <person name="Siddiqui A.S."/>
            <person name="Marra M.A."/>
            <person name="Jones S.J.M."/>
            <person name="Holt R."/>
            <person name="Brinkman F.S.L."/>
            <person name="Miyauchi K."/>
            <person name="Fukuda M."/>
            <person name="Davies J.E."/>
            <person name="Mohn W.W."/>
            <person name="Eltis L.D."/>
        </authorList>
    </citation>
    <scope>NUCLEOTIDE SEQUENCE [LARGE SCALE GENOMIC DNA]</scope>
    <source>
        <strain>RHA1</strain>
    </source>
</reference>
<sequence length="346" mass="36074">MTYALEVDGVDKSFGGATILRGVAFAVEPGSTTAIVGPSGCGKTTLLRLVAGFEKPDAGTIALAGRVVAGSGWAPAHRRSVGYVAQDGALFPHATVGANVGFGLPRRARTPARIAELLEMVSLDPSYAARRPDQLSGGQQQRVALARALAREPELMLLDEPFSALDAGLRANTRRIVADVLAKAAITTILVTHDQPEALSFADRVAVMSAGRLAQIGTPREIYSTPVDVPTAEFIGDAVVLSARVEGSRARCALGDVTVASNGVHGNARVMLRPEQIEVTTDGAGVSGTVVDVEYLGSEMLLGIRLDTGDGEVPERVTVRRFGATALTPGDRVGIRVLGKAVAYDL</sequence>
<protein>
    <recommendedName>
        <fullName evidence="1">Fe(3+) ions import ATP-binding protein FbpC 2</fullName>
        <ecNumber evidence="1">7.2.2.7</ecNumber>
    </recommendedName>
</protein>
<keyword id="KW-0067">ATP-binding</keyword>
<keyword id="KW-1003">Cell membrane</keyword>
<keyword id="KW-0406">Ion transport</keyword>
<keyword id="KW-0408">Iron</keyword>
<keyword id="KW-0410">Iron transport</keyword>
<keyword id="KW-0472">Membrane</keyword>
<keyword id="KW-0547">Nucleotide-binding</keyword>
<keyword id="KW-1278">Translocase</keyword>
<keyword id="KW-0813">Transport</keyword>
<feature type="chain" id="PRO_0000272046" description="Fe(3+) ions import ATP-binding protein FbpC 2">
    <location>
        <begin position="1"/>
        <end position="346"/>
    </location>
</feature>
<feature type="domain" description="ABC transporter" evidence="1">
    <location>
        <begin position="5"/>
        <end position="235"/>
    </location>
</feature>
<feature type="binding site" evidence="1">
    <location>
        <begin position="37"/>
        <end position="44"/>
    </location>
    <ligand>
        <name>ATP</name>
        <dbReference type="ChEBI" id="CHEBI:30616"/>
    </ligand>
</feature>
<name>FBPC2_RHOJR</name>
<organism>
    <name type="scientific">Rhodococcus jostii (strain RHA1)</name>
    <dbReference type="NCBI Taxonomy" id="101510"/>
    <lineage>
        <taxon>Bacteria</taxon>
        <taxon>Bacillati</taxon>
        <taxon>Actinomycetota</taxon>
        <taxon>Actinomycetes</taxon>
        <taxon>Mycobacteriales</taxon>
        <taxon>Nocardiaceae</taxon>
        <taxon>Rhodococcus</taxon>
    </lineage>
</organism>
<evidence type="ECO:0000255" key="1">
    <source>
        <dbReference type="HAMAP-Rule" id="MF_01706"/>
    </source>
</evidence>
<accession>Q0S0Z3</accession>
<comment type="function">
    <text evidence="1">Part of the ABC transporter complex FbpABC involved in Fe(3+) ions import. Responsible for energy coupling to the transport system.</text>
</comment>
<comment type="catalytic activity">
    <reaction evidence="1">
        <text>Fe(3+)(out) + ATP + H2O = Fe(3+)(in) + ADP + phosphate + H(+)</text>
        <dbReference type="Rhea" id="RHEA:12332"/>
        <dbReference type="ChEBI" id="CHEBI:15377"/>
        <dbReference type="ChEBI" id="CHEBI:15378"/>
        <dbReference type="ChEBI" id="CHEBI:29034"/>
        <dbReference type="ChEBI" id="CHEBI:30616"/>
        <dbReference type="ChEBI" id="CHEBI:43474"/>
        <dbReference type="ChEBI" id="CHEBI:456216"/>
        <dbReference type="EC" id="7.2.2.7"/>
    </reaction>
</comment>
<comment type="subunit">
    <text evidence="1">The complex is composed of two ATP-binding proteins (FbpC), two transmembrane proteins (FbpB) and a solute-binding protein (FbpA).</text>
</comment>
<comment type="subcellular location">
    <subcellularLocation>
        <location evidence="1">Cell membrane</location>
        <topology evidence="1">Peripheral membrane protein</topology>
    </subcellularLocation>
</comment>
<comment type="similarity">
    <text evidence="1">Belongs to the ABC transporter superfamily. Fe(3+) ion importer (TC 3.A.1.10) family.</text>
</comment>
<gene>
    <name evidence="1" type="primary">fbpC2</name>
    <name type="ordered locus">RHA1_ro07027</name>
</gene>